<comment type="sequence caution" evidence="5">
    <conflict type="erroneous gene model prediction">
        <sequence resource="EMBL-CDS" id="CAP39812"/>
    </conflict>
</comment>
<keyword id="KW-0175">Coiled coil</keyword>
<keyword id="KW-0479">Metal-binding</keyword>
<keyword id="KW-1185">Reference proteome</keyword>
<keyword id="KW-0677">Repeat</keyword>
<keyword id="KW-0862">Zinc</keyword>
<keyword id="KW-0863">Zinc-finger</keyword>
<protein>
    <recommendedName>
        <fullName>Probable RING finger protein 207 homolog</fullName>
    </recommendedName>
</protein>
<proteinExistence type="predicted"/>
<organism>
    <name type="scientific">Caenorhabditis briggsae</name>
    <dbReference type="NCBI Taxonomy" id="6238"/>
    <lineage>
        <taxon>Eukaryota</taxon>
        <taxon>Metazoa</taxon>
        <taxon>Ecdysozoa</taxon>
        <taxon>Nematoda</taxon>
        <taxon>Chromadorea</taxon>
        <taxon>Rhabditida</taxon>
        <taxon>Rhabditina</taxon>
        <taxon>Rhabditomorpha</taxon>
        <taxon>Rhabditoidea</taxon>
        <taxon>Rhabditidae</taxon>
        <taxon>Peloderinae</taxon>
        <taxon>Caenorhabditis</taxon>
    </lineage>
</organism>
<sequence>MEENPLRCTICKNDFEEPILFSCQHTTCRKCSNGSPSCKTCSPGPSTSRSHTPQPDKLAAFLLDASKEEMEQCANCEQITLPMFYCETCQQSLCLACRNVTHQARMFSSHKIISSEERSKVYSSSLCKDHNEPYILYCSDVRKLVCIQCFNGRPLEERHSFISIEQGHRMCLEKIEQSAAKLRFYQSERQEELNVRQRILDEASNFDDAKTSLYQLCQQIIDTVMTTRETLAKELVKQQEQSDEQCKRQIKEIEAVMGPVRLCLFSAQILCTTASKLDVLQLCPQLQKRISVLLDKTVDKLPVSSTPDSIEVRSDLAKSLEPYLGMSAAWCPISVSREGSSSNSYKRGSGSHKALSMLSKFQTTIDLAGAFGQLFGKVEHPLRQLVVELSSISQQVLETQRDLTIRRCIIEKEDVEKLVKMCKKIEASLGMHSAALDGMQSEMQEIWQEQLDRVRRQQIIYREKVEEILNLRETARQILTAAKQMVPYVSCILNMNAMIAPKRCHPPDPAPMESICLEITGIEPNSQNRIMAIEKEEENRRLNQEAKKKEELAGQSAAMKSLKHGKTKRKEMHHRMMLNTNRERSPGGTDSALTSPCIRRLTSTALKEETASELDAEEILDEIFELSGEQYEEVVDGTLTEEDRCSSALLLSLELQNESVSPLPSLEQLLGRISLASRVTSDIGFSRGAMLQSLNDVFALQKPPTPENISVSEERNVLASAVRNAEKRKSGAGLPTTSEKEEMIENDEIIVEKETETEKKKVIRRRVKKAECEQSEEDVTTTFTFGPPPDCPFVPQEIFDKLGESDEKLGTFEAKERVLQSLKQKMNQKNGIDNDN</sequence>
<name>RN207_CAEBR</name>
<dbReference type="EMBL" id="HE601533">
    <property type="protein sequence ID" value="CAP39812.2"/>
    <property type="status" value="ALT_SEQ"/>
    <property type="molecule type" value="Genomic_DNA"/>
</dbReference>
<dbReference type="FunCoup" id="Q60MF5">
    <property type="interactions" value="46"/>
</dbReference>
<dbReference type="STRING" id="6238.Q60MF5"/>
<dbReference type="EnsemblMetazoa" id="CBG23170.1">
    <property type="protein sequence ID" value="CBG23170.1"/>
    <property type="gene ID" value="WBGene00041575"/>
</dbReference>
<dbReference type="WormBase" id="CBG23170">
    <property type="protein sequence ID" value="CBP43423"/>
    <property type="gene ID" value="WBGene00041575"/>
</dbReference>
<dbReference type="eggNOG" id="KOG2177">
    <property type="taxonomic scope" value="Eukaryota"/>
</dbReference>
<dbReference type="InParanoid" id="Q60MF5"/>
<dbReference type="Proteomes" id="UP000008549">
    <property type="component" value="Unassembled WGS sequence"/>
</dbReference>
<dbReference type="GO" id="GO:0048471">
    <property type="term" value="C:perinuclear region of cytoplasm"/>
    <property type="evidence" value="ECO:0000318"/>
    <property type="project" value="GO_Central"/>
</dbReference>
<dbReference type="GO" id="GO:0030544">
    <property type="term" value="F:Hsp70 protein binding"/>
    <property type="evidence" value="ECO:0000318"/>
    <property type="project" value="GO_Central"/>
</dbReference>
<dbReference type="GO" id="GO:0044325">
    <property type="term" value="F:transmembrane transporter binding"/>
    <property type="evidence" value="ECO:0000318"/>
    <property type="project" value="GO_Central"/>
</dbReference>
<dbReference type="GO" id="GO:0008270">
    <property type="term" value="F:zinc ion binding"/>
    <property type="evidence" value="ECO:0007669"/>
    <property type="project" value="UniProtKB-KW"/>
</dbReference>
<dbReference type="CDD" id="cd19814">
    <property type="entry name" value="Bbox1_RNF207-like"/>
    <property type="match status" value="1"/>
</dbReference>
<dbReference type="CDD" id="cd16449">
    <property type="entry name" value="RING-HC"/>
    <property type="match status" value="1"/>
</dbReference>
<dbReference type="Gene3D" id="1.20.58.1540">
    <property type="entry name" value="Actin interacting protein 3, C-terminal domain"/>
    <property type="match status" value="1"/>
</dbReference>
<dbReference type="Gene3D" id="3.30.160.60">
    <property type="entry name" value="Classic Zinc Finger"/>
    <property type="match status" value="1"/>
</dbReference>
<dbReference type="Gene3D" id="3.30.40.10">
    <property type="entry name" value="Zinc/RING finger domain, C3HC4 (zinc finger)"/>
    <property type="match status" value="1"/>
</dbReference>
<dbReference type="InterPro" id="IPR039320">
    <property type="entry name" value="RNF207"/>
</dbReference>
<dbReference type="InterPro" id="IPR000315">
    <property type="entry name" value="Znf_B-box"/>
</dbReference>
<dbReference type="InterPro" id="IPR001841">
    <property type="entry name" value="Znf_RING"/>
</dbReference>
<dbReference type="InterPro" id="IPR013083">
    <property type="entry name" value="Znf_RING/FYVE/PHD"/>
</dbReference>
<dbReference type="PANTHER" id="PTHR22635">
    <property type="entry name" value="RING FINGER PROTEIN 207"/>
    <property type="match status" value="1"/>
</dbReference>
<dbReference type="PANTHER" id="PTHR22635:SF0">
    <property type="entry name" value="RING FINGER PROTEIN 207"/>
    <property type="match status" value="1"/>
</dbReference>
<dbReference type="SMART" id="SM00336">
    <property type="entry name" value="BBOX"/>
    <property type="match status" value="2"/>
</dbReference>
<dbReference type="SMART" id="SM00184">
    <property type="entry name" value="RING"/>
    <property type="match status" value="1"/>
</dbReference>
<dbReference type="SUPFAM" id="SSF57845">
    <property type="entry name" value="B-box zinc-binding domain"/>
    <property type="match status" value="1"/>
</dbReference>
<dbReference type="SUPFAM" id="SSF57850">
    <property type="entry name" value="RING/U-box"/>
    <property type="match status" value="1"/>
</dbReference>
<dbReference type="PROSITE" id="PS50119">
    <property type="entry name" value="ZF_BBOX"/>
    <property type="match status" value="1"/>
</dbReference>
<dbReference type="PROSITE" id="PS50089">
    <property type="entry name" value="ZF_RING_2"/>
    <property type="match status" value="1"/>
</dbReference>
<accession>Q60MF5</accession>
<accession>A8Y4J2</accession>
<feature type="chain" id="PRO_0000306262" description="Probable RING finger protein 207 homolog">
    <location>
        <begin position="1"/>
        <end position="836"/>
    </location>
</feature>
<feature type="zinc finger region" description="RING-type" evidence="3">
    <location>
        <begin position="8"/>
        <end position="42"/>
    </location>
</feature>
<feature type="zinc finger region" description="B box-type 1; atypical" evidence="2">
    <location>
        <begin position="68"/>
        <end position="115"/>
    </location>
</feature>
<feature type="zinc finger region" description="B box-type 2; degenerate" evidence="2">
    <location>
        <begin position="122"/>
        <end position="164"/>
    </location>
</feature>
<feature type="region of interest" description="Disordered" evidence="4">
    <location>
        <begin position="540"/>
        <end position="571"/>
    </location>
</feature>
<feature type="coiled-coil region" evidence="1">
    <location>
        <begin position="527"/>
        <end position="557"/>
    </location>
</feature>
<feature type="compositionally biased region" description="Basic and acidic residues" evidence="4">
    <location>
        <begin position="540"/>
        <end position="552"/>
    </location>
</feature>
<feature type="compositionally biased region" description="Basic residues" evidence="4">
    <location>
        <begin position="561"/>
        <end position="571"/>
    </location>
</feature>
<feature type="binding site" evidence="2">
    <location>
        <position position="73"/>
    </location>
    <ligand>
        <name>Zn(2+)</name>
        <dbReference type="ChEBI" id="CHEBI:29105"/>
    </ligand>
</feature>
<feature type="binding site" evidence="2">
    <location>
        <position position="76"/>
    </location>
    <ligand>
        <name>Zn(2+)</name>
        <dbReference type="ChEBI" id="CHEBI:29105"/>
    </ligand>
</feature>
<feature type="binding site" evidence="2">
    <location>
        <position position="97"/>
    </location>
    <ligand>
        <name>Zn(2+)</name>
        <dbReference type="ChEBI" id="CHEBI:29105"/>
    </ligand>
</feature>
<feature type="binding site" evidence="2">
    <location>
        <position position="102"/>
    </location>
    <ligand>
        <name>Zn(2+)</name>
        <dbReference type="ChEBI" id="CHEBI:29105"/>
    </ligand>
</feature>
<reference key="1">
    <citation type="journal article" date="2003" name="PLoS Biol.">
        <title>The genome sequence of Caenorhabditis briggsae: a platform for comparative genomics.</title>
        <authorList>
            <person name="Stein L.D."/>
            <person name="Bao Z."/>
            <person name="Blasiar D."/>
            <person name="Blumenthal T."/>
            <person name="Brent M.R."/>
            <person name="Chen N."/>
            <person name="Chinwalla A."/>
            <person name="Clarke L."/>
            <person name="Clee C."/>
            <person name="Coghlan A."/>
            <person name="Coulson A."/>
            <person name="D'Eustachio P."/>
            <person name="Fitch D.H.A."/>
            <person name="Fulton L.A."/>
            <person name="Fulton R.E."/>
            <person name="Griffiths-Jones S."/>
            <person name="Harris T.W."/>
            <person name="Hillier L.W."/>
            <person name="Kamath R."/>
            <person name="Kuwabara P.E."/>
            <person name="Mardis E.R."/>
            <person name="Marra M.A."/>
            <person name="Miner T.L."/>
            <person name="Minx P."/>
            <person name="Mullikin J.C."/>
            <person name="Plumb R.W."/>
            <person name="Rogers J."/>
            <person name="Schein J.E."/>
            <person name="Sohrmann M."/>
            <person name="Spieth J."/>
            <person name="Stajich J.E."/>
            <person name="Wei C."/>
            <person name="Willey D."/>
            <person name="Wilson R.K."/>
            <person name="Durbin R.M."/>
            <person name="Waterston R.H."/>
        </authorList>
    </citation>
    <scope>NUCLEOTIDE SEQUENCE [LARGE SCALE GENOMIC DNA]</scope>
    <source>
        <strain>AF16</strain>
    </source>
</reference>
<gene>
    <name type="ORF">CBG23170</name>
</gene>
<evidence type="ECO:0000255" key="1"/>
<evidence type="ECO:0000255" key="2">
    <source>
        <dbReference type="PROSITE-ProRule" id="PRU00024"/>
    </source>
</evidence>
<evidence type="ECO:0000255" key="3">
    <source>
        <dbReference type="PROSITE-ProRule" id="PRU00175"/>
    </source>
</evidence>
<evidence type="ECO:0000256" key="4">
    <source>
        <dbReference type="SAM" id="MobiDB-lite"/>
    </source>
</evidence>
<evidence type="ECO:0000305" key="5"/>